<gene>
    <name evidence="1" type="primary">nadK</name>
    <name type="ordered locus">UU177</name>
</gene>
<reference key="1">
    <citation type="journal article" date="2000" name="Nature">
        <title>The complete sequence of the mucosal pathogen Ureaplasma urealyticum.</title>
        <authorList>
            <person name="Glass J.I."/>
            <person name="Lefkowitz E.J."/>
            <person name="Glass J.S."/>
            <person name="Heiner C.R."/>
            <person name="Chen E.Y."/>
            <person name="Cassell G.H."/>
        </authorList>
    </citation>
    <scope>NUCLEOTIDE SEQUENCE [LARGE SCALE GENOMIC DNA]</scope>
    <source>
        <strain>ATCC 700970</strain>
    </source>
</reference>
<organism>
    <name type="scientific">Ureaplasma parvum serovar 3 (strain ATCC 700970)</name>
    <dbReference type="NCBI Taxonomy" id="273119"/>
    <lineage>
        <taxon>Bacteria</taxon>
        <taxon>Bacillati</taxon>
        <taxon>Mycoplasmatota</taxon>
        <taxon>Mycoplasmoidales</taxon>
        <taxon>Mycoplasmoidaceae</taxon>
        <taxon>Ureaplasma</taxon>
    </lineage>
</organism>
<protein>
    <recommendedName>
        <fullName evidence="1">NAD kinase</fullName>
        <ecNumber evidence="1">2.7.1.23</ecNumber>
    </recommendedName>
    <alternativeName>
        <fullName evidence="1">ATP-dependent NAD kinase</fullName>
    </alternativeName>
</protein>
<name>NADK_UREPA</name>
<dbReference type="EC" id="2.7.1.23" evidence="1"/>
<dbReference type="EMBL" id="AF222894">
    <property type="protein sequence ID" value="AAF30584.1"/>
    <property type="molecule type" value="Genomic_DNA"/>
</dbReference>
<dbReference type="RefSeq" id="WP_006688904.1">
    <property type="nucleotide sequence ID" value="NC_002162.1"/>
</dbReference>
<dbReference type="SMR" id="Q9PQW6"/>
<dbReference type="STRING" id="273119.UU177"/>
<dbReference type="EnsemblBacteria" id="AAF30584">
    <property type="protein sequence ID" value="AAF30584"/>
    <property type="gene ID" value="UU177"/>
</dbReference>
<dbReference type="GeneID" id="29672697"/>
<dbReference type="KEGG" id="uur:UU177"/>
<dbReference type="eggNOG" id="COG0061">
    <property type="taxonomic scope" value="Bacteria"/>
</dbReference>
<dbReference type="HOGENOM" id="CLU_008831_0_3_14"/>
<dbReference type="OrthoDB" id="9774737at2"/>
<dbReference type="Proteomes" id="UP000000423">
    <property type="component" value="Chromosome"/>
</dbReference>
<dbReference type="GO" id="GO:0005737">
    <property type="term" value="C:cytoplasm"/>
    <property type="evidence" value="ECO:0007669"/>
    <property type="project" value="UniProtKB-SubCell"/>
</dbReference>
<dbReference type="GO" id="GO:0005524">
    <property type="term" value="F:ATP binding"/>
    <property type="evidence" value="ECO:0007669"/>
    <property type="project" value="UniProtKB-KW"/>
</dbReference>
<dbReference type="GO" id="GO:0046872">
    <property type="term" value="F:metal ion binding"/>
    <property type="evidence" value="ECO:0007669"/>
    <property type="project" value="UniProtKB-UniRule"/>
</dbReference>
<dbReference type="GO" id="GO:0051287">
    <property type="term" value="F:NAD binding"/>
    <property type="evidence" value="ECO:0007669"/>
    <property type="project" value="UniProtKB-ARBA"/>
</dbReference>
<dbReference type="GO" id="GO:0003951">
    <property type="term" value="F:NAD+ kinase activity"/>
    <property type="evidence" value="ECO:0007669"/>
    <property type="project" value="UniProtKB-UniRule"/>
</dbReference>
<dbReference type="GO" id="GO:0019674">
    <property type="term" value="P:NAD metabolic process"/>
    <property type="evidence" value="ECO:0007669"/>
    <property type="project" value="InterPro"/>
</dbReference>
<dbReference type="GO" id="GO:0006741">
    <property type="term" value="P:NADP biosynthetic process"/>
    <property type="evidence" value="ECO:0007669"/>
    <property type="project" value="UniProtKB-UniRule"/>
</dbReference>
<dbReference type="Gene3D" id="3.40.50.10330">
    <property type="entry name" value="Probable inorganic polyphosphate/atp-NAD kinase, domain 1"/>
    <property type="match status" value="1"/>
</dbReference>
<dbReference type="Gene3D" id="2.60.200.30">
    <property type="entry name" value="Probable inorganic polyphosphate/atp-NAD kinase, domain 2"/>
    <property type="match status" value="1"/>
</dbReference>
<dbReference type="HAMAP" id="MF_00361">
    <property type="entry name" value="NAD_kinase"/>
    <property type="match status" value="1"/>
</dbReference>
<dbReference type="InterPro" id="IPR017438">
    <property type="entry name" value="ATP-NAD_kinase_N"/>
</dbReference>
<dbReference type="InterPro" id="IPR017437">
    <property type="entry name" value="ATP-NAD_kinase_PpnK-typ_C"/>
</dbReference>
<dbReference type="InterPro" id="IPR016064">
    <property type="entry name" value="NAD/diacylglycerol_kinase_sf"/>
</dbReference>
<dbReference type="InterPro" id="IPR002504">
    <property type="entry name" value="NADK"/>
</dbReference>
<dbReference type="PANTHER" id="PTHR20275">
    <property type="entry name" value="NAD KINASE"/>
    <property type="match status" value="1"/>
</dbReference>
<dbReference type="PANTHER" id="PTHR20275:SF0">
    <property type="entry name" value="NAD KINASE"/>
    <property type="match status" value="1"/>
</dbReference>
<dbReference type="Pfam" id="PF20143">
    <property type="entry name" value="NAD_kinase_C"/>
    <property type="match status" value="1"/>
</dbReference>
<dbReference type="SUPFAM" id="SSF111331">
    <property type="entry name" value="NAD kinase/diacylglycerol kinase-like"/>
    <property type="match status" value="1"/>
</dbReference>
<accession>Q9PQW6</accession>
<proteinExistence type="inferred from homology"/>
<keyword id="KW-0067">ATP-binding</keyword>
<keyword id="KW-0963">Cytoplasm</keyword>
<keyword id="KW-0418">Kinase</keyword>
<keyword id="KW-0520">NAD</keyword>
<keyword id="KW-0521">NADP</keyword>
<keyword id="KW-0547">Nucleotide-binding</keyword>
<keyword id="KW-1185">Reference proteome</keyword>
<keyword id="KW-0808">Transferase</keyword>
<feature type="chain" id="PRO_0000120685" description="NAD kinase">
    <location>
        <begin position="1"/>
        <end position="270"/>
    </location>
</feature>
<feature type="active site" description="Proton acceptor" evidence="1">
    <location>
        <position position="57"/>
    </location>
</feature>
<feature type="binding site" evidence="1">
    <location>
        <begin position="57"/>
        <end position="58"/>
    </location>
    <ligand>
        <name>NAD(+)</name>
        <dbReference type="ChEBI" id="CHEBI:57540"/>
    </ligand>
</feature>
<feature type="binding site" evidence="1">
    <location>
        <begin position="125"/>
        <end position="126"/>
    </location>
    <ligand>
        <name>NAD(+)</name>
        <dbReference type="ChEBI" id="CHEBI:57540"/>
    </ligand>
</feature>
<feature type="binding site" evidence="1">
    <location>
        <position position="150"/>
    </location>
    <ligand>
        <name>NAD(+)</name>
        <dbReference type="ChEBI" id="CHEBI:57540"/>
    </ligand>
</feature>
<feature type="binding site" evidence="1">
    <location>
        <position position="227"/>
    </location>
    <ligand>
        <name>NAD(+)</name>
        <dbReference type="ChEBI" id="CHEBI:57540"/>
    </ligand>
</feature>
<comment type="function">
    <text evidence="1">Involved in the regulation of the intracellular balance of NAD and NADP, and is a key enzyme in the biosynthesis of NADP. Catalyzes specifically the phosphorylation on 2'-hydroxyl of the adenosine moiety of NAD to yield NADP.</text>
</comment>
<comment type="catalytic activity">
    <reaction evidence="1">
        <text>NAD(+) + ATP = ADP + NADP(+) + H(+)</text>
        <dbReference type="Rhea" id="RHEA:18629"/>
        <dbReference type="ChEBI" id="CHEBI:15378"/>
        <dbReference type="ChEBI" id="CHEBI:30616"/>
        <dbReference type="ChEBI" id="CHEBI:57540"/>
        <dbReference type="ChEBI" id="CHEBI:58349"/>
        <dbReference type="ChEBI" id="CHEBI:456216"/>
        <dbReference type="EC" id="2.7.1.23"/>
    </reaction>
</comment>
<comment type="cofactor">
    <cofactor evidence="1">
        <name>a divalent metal cation</name>
        <dbReference type="ChEBI" id="CHEBI:60240"/>
    </cofactor>
</comment>
<comment type="subcellular location">
    <subcellularLocation>
        <location evidence="1">Cytoplasm</location>
    </subcellularLocation>
</comment>
<comment type="similarity">
    <text evidence="1">Belongs to the NAD kinase family.</text>
</comment>
<sequence length="270" mass="31358">MKNNKPICFYDIYCFKPQECFKRNDINLLEDKLKRYSKITFLRNKENPEIIFLLGGDGSFINFINQQWKKNVKIVGINYGQLGFYSSYDSIKTINLDEIIDENMYYNPLLLKVSINNQNFFYCLNELSLFSNELVSFDISINDYPYEKFRGSGLLFVTPSGSTGKNKTAFGPIIFNNHENFIMTEIFPVNHLKYSSLNAPVVFRKDYKISLTNIKFKKSFSVAIDGNIINFSDKINDIKVETIQASSKIHGLNNFKKYIDKLNKSFIKGE</sequence>
<evidence type="ECO:0000255" key="1">
    <source>
        <dbReference type="HAMAP-Rule" id="MF_00361"/>
    </source>
</evidence>